<keyword id="KW-0007">Acetylation</keyword>
<keyword id="KW-0067">ATP-binding</keyword>
<keyword id="KW-0963">Cytoplasm</keyword>
<keyword id="KW-0547">Nucleotide-binding</keyword>
<keyword id="KW-0539">Nucleus</keyword>
<keyword id="KW-1267">Proteomics identification</keyword>
<keyword id="KW-1185">Reference proteome</keyword>
<accession>O43301</accession>
<reference key="1">
    <citation type="journal article" date="1997" name="DNA Res.">
        <title>Prediction of the coding sequences of unidentified human genes. VIII. 78 new cDNA clones from brain which code for large proteins in vitro.</title>
        <authorList>
            <person name="Ishikawa K."/>
            <person name="Nagase T."/>
            <person name="Nakajima D."/>
            <person name="Seki N."/>
            <person name="Ohira M."/>
            <person name="Miyajima N."/>
            <person name="Tanaka A."/>
            <person name="Kotani H."/>
            <person name="Nomura N."/>
            <person name="Ohara O."/>
        </authorList>
    </citation>
    <scope>NUCLEOTIDE SEQUENCE [LARGE SCALE MRNA]</scope>
    <source>
        <tissue>Brain</tissue>
    </source>
</reference>
<reference key="2">
    <citation type="journal article" date="2003" name="Proc. Natl. Acad. Sci. U.S.A.">
        <title>Two Hsp70 family members expressed in atherosclerotic lesions.</title>
        <authorList>
            <person name="Han Z."/>
            <person name="Truong Q.A."/>
            <person name="Park S."/>
            <person name="Breslow J.L."/>
        </authorList>
    </citation>
    <scope>IDENTIFICATION</scope>
    <scope>TISSUE SPECIFICITY</scope>
</reference>
<reference key="3">
    <citation type="journal article" date="2008" name="Proc. Natl. Acad. Sci. U.S.A.">
        <title>A quantitative atlas of mitotic phosphorylation.</title>
        <authorList>
            <person name="Dephoure N."/>
            <person name="Zhou C."/>
            <person name="Villen J."/>
            <person name="Beausoleil S.A."/>
            <person name="Bakalarski C.E."/>
            <person name="Elledge S.J."/>
            <person name="Gygi S.P."/>
        </authorList>
    </citation>
    <scope>IDENTIFICATION BY MASS SPECTROMETRY [LARGE SCALE ANALYSIS]</scope>
    <source>
        <tissue>Cervix carcinoma</tissue>
    </source>
</reference>
<reference key="4">
    <citation type="journal article" date="2009" name="Anal. Chem.">
        <title>Lys-N and trypsin cover complementary parts of the phosphoproteome in a refined SCX-based approach.</title>
        <authorList>
            <person name="Gauci S."/>
            <person name="Helbig A.O."/>
            <person name="Slijper M."/>
            <person name="Krijgsveld J."/>
            <person name="Heck A.J."/>
            <person name="Mohammed S."/>
        </authorList>
    </citation>
    <scope>IDENTIFICATION BY MASS SPECTROMETRY [LARGE SCALE ANALYSIS]</scope>
</reference>
<reference key="5">
    <citation type="journal article" date="2011" name="BMC Syst. Biol.">
        <title>Initial characterization of the human central proteome.</title>
        <authorList>
            <person name="Burkard T.R."/>
            <person name="Planyavsky M."/>
            <person name="Kaupe I."/>
            <person name="Breitwieser F.P."/>
            <person name="Buerckstuemmer T."/>
            <person name="Bennett K.L."/>
            <person name="Superti-Furga G."/>
            <person name="Colinge J."/>
        </authorList>
    </citation>
    <scope>IDENTIFICATION BY MASS SPECTROMETRY [LARGE SCALE ANALYSIS]</scope>
</reference>
<reference key="6">
    <citation type="journal article" date="2012" name="Proc. Natl. Acad. Sci. U.S.A.">
        <title>N-terminal acetylome analyses and functional insights of the N-terminal acetyltransferase NatB.</title>
        <authorList>
            <person name="Van Damme P."/>
            <person name="Lasa M."/>
            <person name="Polevoda B."/>
            <person name="Gazquez C."/>
            <person name="Elosegui-Artola A."/>
            <person name="Kim D.S."/>
            <person name="De Juan-Pardo E."/>
            <person name="Demeyer K."/>
            <person name="Hole K."/>
            <person name="Larrea E."/>
            <person name="Timmerman E."/>
            <person name="Prieto J."/>
            <person name="Arnesen T."/>
            <person name="Sherman F."/>
            <person name="Gevaert K."/>
            <person name="Aldabe R."/>
        </authorList>
    </citation>
    <scope>ACETYLATION [LARGE SCALE ANALYSIS] AT ALA-2</scope>
    <scope>CLEAVAGE OF INITIATOR METHIONINE [LARGE SCALE ANALYSIS]</scope>
    <scope>IDENTIFICATION BY MASS SPECTROMETRY [LARGE SCALE ANALYSIS]</scope>
</reference>
<reference key="7">
    <citation type="journal article" date="2019" name="Sci. Rep.">
        <title>HSPA12A targets the cytoplasmic domain and affects the trafficking of the Amyloid Precursor Protein receptor SorLA.</title>
        <authorList>
            <person name="Madsen P."/>
            <person name="Isaksen T.J."/>
            <person name="Siupka P."/>
            <person name="Toth A.E."/>
            <person name="Nyegaard M."/>
            <person name="Gustafsen C."/>
            <person name="Nielsen M.S."/>
        </authorList>
    </citation>
    <scope>FUNCTION</scope>
    <scope>INTERACTION WITH SORL1</scope>
</reference>
<organism>
    <name type="scientific">Homo sapiens</name>
    <name type="common">Human</name>
    <dbReference type="NCBI Taxonomy" id="9606"/>
    <lineage>
        <taxon>Eukaryota</taxon>
        <taxon>Metazoa</taxon>
        <taxon>Chordata</taxon>
        <taxon>Craniata</taxon>
        <taxon>Vertebrata</taxon>
        <taxon>Euteleostomi</taxon>
        <taxon>Mammalia</taxon>
        <taxon>Eutheria</taxon>
        <taxon>Euarchontoglires</taxon>
        <taxon>Primates</taxon>
        <taxon>Haplorrhini</taxon>
        <taxon>Catarrhini</taxon>
        <taxon>Hominidae</taxon>
        <taxon>Homo</taxon>
    </lineage>
</organism>
<feature type="initiator methionine" description="Removed" evidence="6">
    <location>
        <position position="1"/>
    </location>
</feature>
<feature type="chain" id="PRO_0000078292" description="Heat shock 70 kDa protein 12A">
    <location>
        <begin position="2"/>
        <end position="675"/>
    </location>
</feature>
<feature type="region of interest" description="Disordered" evidence="2">
    <location>
        <begin position="1"/>
        <end position="45"/>
    </location>
</feature>
<feature type="compositionally biased region" description="Basic and acidic residues" evidence="2">
    <location>
        <begin position="1"/>
        <end position="13"/>
    </location>
</feature>
<feature type="compositionally biased region" description="Polar residues" evidence="2">
    <location>
        <begin position="16"/>
        <end position="25"/>
    </location>
</feature>
<feature type="compositionally biased region" description="Polar residues" evidence="2">
    <location>
        <begin position="34"/>
        <end position="45"/>
    </location>
</feature>
<feature type="modified residue" description="N-acetylalanine" evidence="6">
    <location>
        <position position="2"/>
    </location>
</feature>
<evidence type="ECO:0000250" key="1">
    <source>
        <dbReference type="UniProtKB" id="Q8K0U4"/>
    </source>
</evidence>
<evidence type="ECO:0000256" key="2">
    <source>
        <dbReference type="SAM" id="MobiDB-lite"/>
    </source>
</evidence>
<evidence type="ECO:0000269" key="3">
    <source>
    </source>
</evidence>
<evidence type="ECO:0000269" key="4">
    <source>
    </source>
</evidence>
<evidence type="ECO:0000305" key="5"/>
<evidence type="ECO:0007744" key="6">
    <source>
    </source>
</evidence>
<name>HS12A_HUMAN</name>
<dbReference type="EMBL" id="AB007877">
    <property type="protein sequence ID" value="BAA24847.1"/>
    <property type="status" value="ALT_INIT"/>
    <property type="molecule type" value="mRNA"/>
</dbReference>
<dbReference type="CCDS" id="CCDS41569.1"/>
<dbReference type="PIR" id="T00055">
    <property type="entry name" value="T00055"/>
</dbReference>
<dbReference type="RefSeq" id="NP_079291.2">
    <property type="nucleotide sequence ID" value="NM_025015.2"/>
</dbReference>
<dbReference type="SMR" id="O43301"/>
<dbReference type="BioGRID" id="129226">
    <property type="interactions" value="118"/>
</dbReference>
<dbReference type="FunCoup" id="O43301">
    <property type="interactions" value="582"/>
</dbReference>
<dbReference type="IntAct" id="O43301">
    <property type="interactions" value="74"/>
</dbReference>
<dbReference type="MINT" id="O43301"/>
<dbReference type="STRING" id="9606.ENSP00000489674"/>
<dbReference type="GlyCosmos" id="O43301">
    <property type="glycosylation" value="2 sites, 1 glycan"/>
</dbReference>
<dbReference type="GlyGen" id="O43301">
    <property type="glycosylation" value="2 sites, 1 O-linked glycan (2 sites)"/>
</dbReference>
<dbReference type="iPTMnet" id="O43301"/>
<dbReference type="PhosphoSitePlus" id="O43301"/>
<dbReference type="SwissPalm" id="O43301"/>
<dbReference type="BioMuta" id="HSPA12A"/>
<dbReference type="jPOST" id="O43301"/>
<dbReference type="MassIVE" id="O43301"/>
<dbReference type="PaxDb" id="9606-ENSP00000358211"/>
<dbReference type="PeptideAtlas" id="O43301"/>
<dbReference type="ProteomicsDB" id="48876"/>
<dbReference type="Pumba" id="O43301"/>
<dbReference type="Antibodypedia" id="2201">
    <property type="antibodies" value="102 antibodies from 23 providers"/>
</dbReference>
<dbReference type="DNASU" id="259217"/>
<dbReference type="Ensembl" id="ENST00000369209.8">
    <property type="protein sequence ID" value="ENSP00000358211.3"/>
    <property type="gene ID" value="ENSG00000165868.16"/>
</dbReference>
<dbReference type="GeneID" id="259217"/>
<dbReference type="KEGG" id="hsa:259217"/>
<dbReference type="MANE-Select" id="ENST00000369209.8">
    <property type="protein sequence ID" value="ENSP00000358211.3"/>
    <property type="RefSeq nucleotide sequence ID" value="NM_025015.3"/>
    <property type="RefSeq protein sequence ID" value="NP_079291.2"/>
</dbReference>
<dbReference type="UCSC" id="uc001lct.3">
    <property type="organism name" value="human"/>
</dbReference>
<dbReference type="AGR" id="HGNC:19022"/>
<dbReference type="CTD" id="259217"/>
<dbReference type="DisGeNET" id="259217"/>
<dbReference type="GeneCards" id="HSPA12A"/>
<dbReference type="HGNC" id="HGNC:19022">
    <property type="gene designation" value="HSPA12A"/>
</dbReference>
<dbReference type="HPA" id="ENSG00000165868">
    <property type="expression patterns" value="Tissue enhanced (brain)"/>
</dbReference>
<dbReference type="MIM" id="610701">
    <property type="type" value="gene"/>
</dbReference>
<dbReference type="neXtProt" id="NX_O43301"/>
<dbReference type="OpenTargets" id="ENSG00000165868"/>
<dbReference type="PharmGKB" id="PA38779"/>
<dbReference type="VEuPathDB" id="HostDB:ENSG00000165868"/>
<dbReference type="eggNOG" id="KOG0101">
    <property type="taxonomic scope" value="Eukaryota"/>
</dbReference>
<dbReference type="GeneTree" id="ENSGT00940000154551"/>
<dbReference type="HOGENOM" id="CLU_009958_5_3_1"/>
<dbReference type="InParanoid" id="O43301"/>
<dbReference type="OMA" id="MGRCTSR"/>
<dbReference type="OrthoDB" id="2963168at2759"/>
<dbReference type="PAN-GO" id="O43301">
    <property type="GO annotations" value="0 GO annotations based on evolutionary models"/>
</dbReference>
<dbReference type="PhylomeDB" id="O43301"/>
<dbReference type="TreeFam" id="TF329492"/>
<dbReference type="PathwayCommons" id="O43301"/>
<dbReference type="Reactome" id="R-HSA-3371453">
    <property type="pathway name" value="Regulation of HSF1-mediated heat shock response"/>
</dbReference>
<dbReference type="SignaLink" id="O43301"/>
<dbReference type="BioGRID-ORCS" id="259217">
    <property type="hits" value="6 hits in 1141 CRISPR screens"/>
</dbReference>
<dbReference type="CD-CODE" id="FB4E32DD">
    <property type="entry name" value="Presynaptic clusters and postsynaptic densities"/>
</dbReference>
<dbReference type="ChiTaRS" id="HSPA12A">
    <property type="organism name" value="human"/>
</dbReference>
<dbReference type="GenomeRNAi" id="259217"/>
<dbReference type="Pharos" id="O43301">
    <property type="development level" value="Tbio"/>
</dbReference>
<dbReference type="PRO" id="PR:O43301"/>
<dbReference type="Proteomes" id="UP000005640">
    <property type="component" value="Chromosome 10"/>
</dbReference>
<dbReference type="RNAct" id="O43301">
    <property type="molecule type" value="protein"/>
</dbReference>
<dbReference type="Bgee" id="ENSG00000165868">
    <property type="expression patterns" value="Expressed in lateral nuclear group of thalamus and 178 other cell types or tissues"/>
</dbReference>
<dbReference type="ExpressionAtlas" id="O43301">
    <property type="expression patterns" value="baseline and differential"/>
</dbReference>
<dbReference type="GO" id="GO:0005737">
    <property type="term" value="C:cytoplasm"/>
    <property type="evidence" value="ECO:0007669"/>
    <property type="project" value="UniProtKB-SubCell"/>
</dbReference>
<dbReference type="GO" id="GO:0070062">
    <property type="term" value="C:extracellular exosome"/>
    <property type="evidence" value="ECO:0007005"/>
    <property type="project" value="UniProtKB"/>
</dbReference>
<dbReference type="GO" id="GO:0005634">
    <property type="term" value="C:nucleus"/>
    <property type="evidence" value="ECO:0007669"/>
    <property type="project" value="UniProtKB-SubCell"/>
</dbReference>
<dbReference type="GO" id="GO:0005524">
    <property type="term" value="F:ATP binding"/>
    <property type="evidence" value="ECO:0007669"/>
    <property type="project" value="UniProtKB-KW"/>
</dbReference>
<dbReference type="GO" id="GO:0051170">
    <property type="term" value="P:import into nucleus"/>
    <property type="evidence" value="ECO:0007669"/>
    <property type="project" value="Ensembl"/>
</dbReference>
<dbReference type="GO" id="GO:0006954">
    <property type="term" value="P:inflammatory response"/>
    <property type="evidence" value="ECO:0007669"/>
    <property type="project" value="Ensembl"/>
</dbReference>
<dbReference type="GO" id="GO:0001889">
    <property type="term" value="P:liver development"/>
    <property type="evidence" value="ECO:0007669"/>
    <property type="project" value="Ensembl"/>
</dbReference>
<dbReference type="GO" id="GO:0042116">
    <property type="term" value="P:macrophage activation"/>
    <property type="evidence" value="ECO:0007669"/>
    <property type="project" value="Ensembl"/>
</dbReference>
<dbReference type="CDD" id="cd11735">
    <property type="entry name" value="ASKHA_NBD_HSP70_HSPA12A"/>
    <property type="match status" value="1"/>
</dbReference>
<dbReference type="FunFam" id="3.30.420.40:FF:000061">
    <property type="entry name" value="Heat shock protein family A (Hsp70) member 12A"/>
    <property type="match status" value="1"/>
</dbReference>
<dbReference type="FunFam" id="3.90.640.10:FF:000011">
    <property type="entry name" value="Heat shock protein family A (Hsp70) member 12A"/>
    <property type="match status" value="1"/>
</dbReference>
<dbReference type="Gene3D" id="3.30.420.40">
    <property type="match status" value="2"/>
</dbReference>
<dbReference type="Gene3D" id="3.90.640.10">
    <property type="entry name" value="Actin, Chain A, domain 4"/>
    <property type="match status" value="1"/>
</dbReference>
<dbReference type="InterPro" id="IPR043129">
    <property type="entry name" value="ATPase_NBD"/>
</dbReference>
<dbReference type="InterPro" id="IPR026685">
    <property type="entry name" value="HSPA12A_NBD"/>
</dbReference>
<dbReference type="PANTHER" id="PTHR14187">
    <property type="entry name" value="ALPHA KINASE/ELONGATION FACTOR 2 KINASE"/>
    <property type="match status" value="1"/>
</dbReference>
<dbReference type="PANTHER" id="PTHR14187:SF46">
    <property type="entry name" value="HEAT SHOCK 70 KDA PROTEIN 12A"/>
    <property type="match status" value="1"/>
</dbReference>
<dbReference type="SUPFAM" id="SSF53067">
    <property type="entry name" value="Actin-like ATPase domain"/>
    <property type="match status" value="2"/>
</dbReference>
<sequence>MADKEAGGSDGPRETAPTSAYSSPARSLGDTGITPLSPSHIVNDTDSNVSEQQSFLVVVAVDFGTTSSGYAYSFTKEPECIHVMRRWEGGDPGVSNQKTPTTILLTPERKFHSFGYAARDFYHDLDPNEAKQWLYLEKFKMKLHTTGDLTMDTDLTAANGKKVKALEIFAYALQYFKEQALKELSDQAGSEFENSDVRWVITVPAIWKQPAKQFMRQAAYQAGLASPENSEQLIIALEPEAASIYCRKLRLHQMIELSSKAAVNGYSGSDTVGAGFTQAKEHIRRNRQSRTFLVENVIGEIWSELEEGDKYVVVDSGGGTVDLTVHQIRLPEGHLKELYKATGGPYGSLGVDYEFEKLLYKIFGEDFIEQFKIKRPAAWVDLMIAFESRKRAAAPDRTNPLNITLPFSFIDYYKKFRGHSVEHALRKSNVDFVKWSSQGMLRMSPDAMNALFKPTIDSIIEHLRDLFQKPEVSTVKFLFLVGGFAEAPLLQQAVQAAFGDQCRIIIPQDVGLTILKGAVLFGLDPAVIKVRRSPLTYGVGVLNRYVEGKHPPEKLLVKDGTRWCTDVFDKFISADQSVALGELVKRSYTPAKPSQLVIVINIYSSEHDNVSFITDPGVKKCGTLRLDLTGTSGTAVPARREIQTLMQFGDTEIKATAIDIATSKSVKVGIDFLNY</sequence>
<gene>
    <name type="primary">HSPA12A</name>
    <name type="synonym">KIAA0417</name>
</gene>
<protein>
    <recommendedName>
        <fullName>Heat shock 70 kDa protein 12A</fullName>
    </recommendedName>
    <alternativeName>
        <fullName>Heat shock protein family A member 12A</fullName>
    </alternativeName>
</protein>
<proteinExistence type="evidence at protein level"/>
<comment type="function">
    <text evidence="4">Adapter protein for SORL1, but not SORT1. Delays SORL1 internalization and affects SORL1 subcellular localization.</text>
</comment>
<comment type="subunit">
    <text evidence="4">Interacts with SORL1 (via cytosolic C-terminus); this interaction affects SORL1 internalization and subcellular localization.</text>
</comment>
<comment type="interaction">
    <interactant intactId="EBI-296980">
        <id>O43301</id>
    </interactant>
    <interactant intactId="EBI-10291310">
        <id>Q96MM6</id>
        <label>HSPA12B</label>
    </interactant>
    <organismsDiffer>false</organismsDiffer>
    <experiments>5</experiments>
</comment>
<comment type="interaction">
    <interactant intactId="EBI-296980">
        <id>O43301</id>
    </interactant>
    <interactant intactId="EBI-1171329">
        <id>Q92673</id>
        <label>SORL1</label>
    </interactant>
    <organismsDiffer>false</organismsDiffer>
    <experiments>5</experiments>
</comment>
<comment type="subcellular location">
    <subcellularLocation>
        <location evidence="1">Cytoplasm</location>
    </subcellularLocation>
    <subcellularLocation>
        <location evidence="1">Nucleus</location>
    </subcellularLocation>
</comment>
<comment type="tissue specificity">
    <text evidence="3">Widely expressed with highest levels in brain, kidney and muscle.</text>
</comment>
<comment type="similarity">
    <text evidence="5">Belongs to the heat shock protein 70 family.</text>
</comment>
<comment type="sequence caution" evidence="5">
    <conflict type="erroneous initiation">
        <sequence resource="EMBL-CDS" id="BAA24847"/>
    </conflict>
</comment>